<comment type="function">
    <text evidence="1">Part of the ecpRABCDE operon, which encodes the E.coli common pilus (ECP). ECP is found in both commensal and pathogenic strains and plays a dual role in early-stage biofilm development and host cell recognition. Positively regulates the expression of the ecp operon (By similarity).</text>
</comment>
<comment type="subcellular location">
    <subcellularLocation>
        <location evidence="3">Cytoplasm</location>
    </subcellularLocation>
</comment>
<comment type="induction">
    <text evidence="1">Negatively regulated by H-NS. Positively autoregulated. Also positively regulated by IHF (By similarity).</text>
</comment>
<comment type="similarity">
    <text evidence="3">Belongs to the EcpR/MatA family.</text>
</comment>
<comment type="sequence caution" evidence="3">
    <conflict type="erroneous initiation">
        <sequence resource="EMBL-CDS" id="ACB19272"/>
    </conflict>
</comment>
<feature type="chain" id="PRO_0000369176" description="HTH-type transcriptional regulator EcpR">
    <location>
        <begin position="1"/>
        <end position="196"/>
    </location>
</feature>
<feature type="domain" description="HTH luxR-type" evidence="2">
    <location>
        <begin position="138"/>
        <end position="196"/>
    </location>
</feature>
<feature type="DNA-binding region" description="H-T-H motif" evidence="2">
    <location>
        <begin position="162"/>
        <end position="181"/>
    </location>
</feature>
<evidence type="ECO:0000250" key="1"/>
<evidence type="ECO:0000255" key="2">
    <source>
        <dbReference type="PROSITE-ProRule" id="PRU00411"/>
    </source>
</evidence>
<evidence type="ECO:0000305" key="3"/>
<keyword id="KW-0010">Activator</keyword>
<keyword id="KW-0963">Cytoplasm</keyword>
<keyword id="KW-0238">DNA-binding</keyword>
<keyword id="KW-0804">Transcription</keyword>
<keyword id="KW-0805">Transcription regulation</keyword>
<accession>B1LHW0</accession>
<sequence length="196" mass="23299">MTWQNDYSRDYEVKNHMECQNRSDKYIWSPHDAYFYKGLSELIVDIDRLIYLSLEKIRKDFVFINLNTDSLTEFINRDNEWLSAVKGKQVVLIAARKSEALANYWYYNSNIRGVVYAGLSRDIRKELAYVINGRFLRKDIKKDKITDREMEIIRMTAQGMLPKSIARIENCSVKTVYTHRRNAEAKLYSKLYKLVQ</sequence>
<name>ECPR_ECOSM</name>
<dbReference type="EMBL" id="CP000970">
    <property type="protein sequence ID" value="ACB19272.1"/>
    <property type="status" value="ALT_INIT"/>
    <property type="molecule type" value="Genomic_DNA"/>
</dbReference>
<dbReference type="SMR" id="B1LHW0"/>
<dbReference type="KEGG" id="ecm:EcSMS35_0320"/>
<dbReference type="HOGENOM" id="CLU_128111_0_0_6"/>
<dbReference type="Proteomes" id="UP000007011">
    <property type="component" value="Chromosome"/>
</dbReference>
<dbReference type="GO" id="GO:0005737">
    <property type="term" value="C:cytoplasm"/>
    <property type="evidence" value="ECO:0007669"/>
    <property type="project" value="UniProtKB-SubCell"/>
</dbReference>
<dbReference type="GO" id="GO:0003677">
    <property type="term" value="F:DNA binding"/>
    <property type="evidence" value="ECO:0007669"/>
    <property type="project" value="UniProtKB-KW"/>
</dbReference>
<dbReference type="GO" id="GO:0006355">
    <property type="term" value="P:regulation of DNA-templated transcription"/>
    <property type="evidence" value="ECO:0007669"/>
    <property type="project" value="InterPro"/>
</dbReference>
<dbReference type="CDD" id="cd06170">
    <property type="entry name" value="LuxR_C_like"/>
    <property type="match status" value="1"/>
</dbReference>
<dbReference type="Gene3D" id="1.10.10.10">
    <property type="entry name" value="Winged helix-like DNA-binding domain superfamily/Winged helix DNA-binding domain"/>
    <property type="match status" value="1"/>
</dbReference>
<dbReference type="InterPro" id="IPR016032">
    <property type="entry name" value="Sig_transdc_resp-reg_C-effctor"/>
</dbReference>
<dbReference type="InterPro" id="IPR000792">
    <property type="entry name" value="Tscrpt_reg_LuxR_C"/>
</dbReference>
<dbReference type="InterPro" id="IPR036388">
    <property type="entry name" value="WH-like_DNA-bd_sf"/>
</dbReference>
<dbReference type="Pfam" id="PF00196">
    <property type="entry name" value="GerE"/>
    <property type="match status" value="1"/>
</dbReference>
<dbReference type="PRINTS" id="PR00038">
    <property type="entry name" value="HTHLUXR"/>
</dbReference>
<dbReference type="SMART" id="SM00421">
    <property type="entry name" value="HTH_LUXR"/>
    <property type="match status" value="1"/>
</dbReference>
<dbReference type="SUPFAM" id="SSF46894">
    <property type="entry name" value="C-terminal effector domain of the bipartite response regulators"/>
    <property type="match status" value="1"/>
</dbReference>
<dbReference type="PROSITE" id="PS50043">
    <property type="entry name" value="HTH_LUXR_2"/>
    <property type="match status" value="1"/>
</dbReference>
<gene>
    <name type="primary">ecpR</name>
    <name type="synonym">matA</name>
    <name type="ordered locus">EcSMS35_0320</name>
</gene>
<reference key="1">
    <citation type="journal article" date="2008" name="J. Bacteriol.">
        <title>Insights into the environmental resistance gene pool from the genome sequence of the multidrug-resistant environmental isolate Escherichia coli SMS-3-5.</title>
        <authorList>
            <person name="Fricke W.F."/>
            <person name="Wright M.S."/>
            <person name="Lindell A.H."/>
            <person name="Harkins D.M."/>
            <person name="Baker-Austin C."/>
            <person name="Ravel J."/>
            <person name="Stepanauskas R."/>
        </authorList>
    </citation>
    <scope>NUCLEOTIDE SEQUENCE [LARGE SCALE GENOMIC DNA]</scope>
    <source>
        <strain>SMS-3-5 / SECEC</strain>
    </source>
</reference>
<proteinExistence type="inferred from homology"/>
<protein>
    <recommendedName>
        <fullName>HTH-type transcriptional regulator EcpR</fullName>
    </recommendedName>
</protein>
<organism>
    <name type="scientific">Escherichia coli (strain SMS-3-5 / SECEC)</name>
    <dbReference type="NCBI Taxonomy" id="439855"/>
    <lineage>
        <taxon>Bacteria</taxon>
        <taxon>Pseudomonadati</taxon>
        <taxon>Pseudomonadota</taxon>
        <taxon>Gammaproteobacteria</taxon>
        <taxon>Enterobacterales</taxon>
        <taxon>Enterobacteriaceae</taxon>
        <taxon>Escherichia</taxon>
    </lineage>
</organism>